<protein>
    <recommendedName>
        <fullName evidence="1">NH(3)-dependent NAD(+) synthetase</fullName>
        <ecNumber evidence="1">6.3.1.5</ecNumber>
    </recommendedName>
</protein>
<evidence type="ECO:0000255" key="1">
    <source>
        <dbReference type="HAMAP-Rule" id="MF_00193"/>
    </source>
</evidence>
<keyword id="KW-0067">ATP-binding</keyword>
<keyword id="KW-0436">Ligase</keyword>
<keyword id="KW-0460">Magnesium</keyword>
<keyword id="KW-0479">Metal-binding</keyword>
<keyword id="KW-0520">NAD</keyword>
<keyword id="KW-0547">Nucleotide-binding</keyword>
<accession>C1CQT7</accession>
<reference key="1">
    <citation type="journal article" date="2010" name="Genome Biol.">
        <title>Structure and dynamics of the pan-genome of Streptococcus pneumoniae and closely related species.</title>
        <authorList>
            <person name="Donati C."/>
            <person name="Hiller N.L."/>
            <person name="Tettelin H."/>
            <person name="Muzzi A."/>
            <person name="Croucher N.J."/>
            <person name="Angiuoli S.V."/>
            <person name="Oggioni M."/>
            <person name="Dunning Hotopp J.C."/>
            <person name="Hu F.Z."/>
            <person name="Riley D.R."/>
            <person name="Covacci A."/>
            <person name="Mitchell T.J."/>
            <person name="Bentley S.D."/>
            <person name="Kilian M."/>
            <person name="Ehrlich G.D."/>
            <person name="Rappuoli R."/>
            <person name="Moxon E.R."/>
            <person name="Masignani V."/>
        </authorList>
    </citation>
    <scope>NUCLEOTIDE SEQUENCE [LARGE SCALE GENOMIC DNA]</scope>
    <source>
        <strain>Taiwan19F-14</strain>
    </source>
</reference>
<dbReference type="EC" id="6.3.1.5" evidence="1"/>
<dbReference type="EMBL" id="CP000921">
    <property type="protein sequence ID" value="ACO24034.1"/>
    <property type="molecule type" value="Genomic_DNA"/>
</dbReference>
<dbReference type="RefSeq" id="WP_000058033.1">
    <property type="nucleotide sequence ID" value="NC_012469.1"/>
</dbReference>
<dbReference type="SMR" id="C1CQT7"/>
<dbReference type="GeneID" id="45653323"/>
<dbReference type="KEGG" id="snt:SPT_0854"/>
<dbReference type="HOGENOM" id="CLU_059327_3_0_9"/>
<dbReference type="UniPathway" id="UPA00253">
    <property type="reaction ID" value="UER00333"/>
</dbReference>
<dbReference type="GO" id="GO:0005737">
    <property type="term" value="C:cytoplasm"/>
    <property type="evidence" value="ECO:0007669"/>
    <property type="project" value="InterPro"/>
</dbReference>
<dbReference type="GO" id="GO:0005524">
    <property type="term" value="F:ATP binding"/>
    <property type="evidence" value="ECO:0007669"/>
    <property type="project" value="UniProtKB-UniRule"/>
</dbReference>
<dbReference type="GO" id="GO:0004359">
    <property type="term" value="F:glutaminase activity"/>
    <property type="evidence" value="ECO:0007669"/>
    <property type="project" value="InterPro"/>
</dbReference>
<dbReference type="GO" id="GO:0046872">
    <property type="term" value="F:metal ion binding"/>
    <property type="evidence" value="ECO:0007669"/>
    <property type="project" value="UniProtKB-KW"/>
</dbReference>
<dbReference type="GO" id="GO:0003952">
    <property type="term" value="F:NAD+ synthase (glutamine-hydrolyzing) activity"/>
    <property type="evidence" value="ECO:0007669"/>
    <property type="project" value="InterPro"/>
</dbReference>
<dbReference type="GO" id="GO:0008795">
    <property type="term" value="F:NAD+ synthase activity"/>
    <property type="evidence" value="ECO:0007669"/>
    <property type="project" value="UniProtKB-UniRule"/>
</dbReference>
<dbReference type="GO" id="GO:0009435">
    <property type="term" value="P:NAD biosynthetic process"/>
    <property type="evidence" value="ECO:0007669"/>
    <property type="project" value="UniProtKB-UniRule"/>
</dbReference>
<dbReference type="CDD" id="cd00553">
    <property type="entry name" value="NAD_synthase"/>
    <property type="match status" value="1"/>
</dbReference>
<dbReference type="FunFam" id="3.40.50.620:FF:000015">
    <property type="entry name" value="NH(3)-dependent NAD(+) synthetase"/>
    <property type="match status" value="1"/>
</dbReference>
<dbReference type="Gene3D" id="3.40.50.620">
    <property type="entry name" value="HUPs"/>
    <property type="match status" value="1"/>
</dbReference>
<dbReference type="HAMAP" id="MF_00193">
    <property type="entry name" value="NadE_ammonia_dep"/>
    <property type="match status" value="1"/>
</dbReference>
<dbReference type="InterPro" id="IPR022310">
    <property type="entry name" value="NAD/GMP_synthase"/>
</dbReference>
<dbReference type="InterPro" id="IPR003694">
    <property type="entry name" value="NAD_synthase"/>
</dbReference>
<dbReference type="InterPro" id="IPR022926">
    <property type="entry name" value="NH(3)-dep_NAD(+)_synth"/>
</dbReference>
<dbReference type="InterPro" id="IPR014729">
    <property type="entry name" value="Rossmann-like_a/b/a_fold"/>
</dbReference>
<dbReference type="NCBIfam" id="TIGR00552">
    <property type="entry name" value="nadE"/>
    <property type="match status" value="1"/>
</dbReference>
<dbReference type="NCBIfam" id="NF001979">
    <property type="entry name" value="PRK00768.1"/>
    <property type="match status" value="1"/>
</dbReference>
<dbReference type="PANTHER" id="PTHR23090">
    <property type="entry name" value="NH 3 /GLUTAMINE-DEPENDENT NAD + SYNTHETASE"/>
    <property type="match status" value="1"/>
</dbReference>
<dbReference type="PANTHER" id="PTHR23090:SF7">
    <property type="entry name" value="NH(3)-DEPENDENT NAD(+) SYNTHETASE"/>
    <property type="match status" value="1"/>
</dbReference>
<dbReference type="Pfam" id="PF02540">
    <property type="entry name" value="NAD_synthase"/>
    <property type="match status" value="1"/>
</dbReference>
<dbReference type="SUPFAM" id="SSF52402">
    <property type="entry name" value="Adenine nucleotide alpha hydrolases-like"/>
    <property type="match status" value="1"/>
</dbReference>
<sequence>MSLQETIIQELGVKPVIDAQEEIRRSIDFLKRYLKKHPFLKTFVLGISGGQDSTLAGRLAQLAMEELRAETGDDSYKFIAVRLPYGVQADEADAQKALAFIQPDVSLVVNIKESADAMTAAVEATGSPVSDFNKGNIKARCRMIAQYALAGSHSGAVIGTDHAAENITGFFTKFGDGGADILPLYRLNKRQGKQLLQKLGAEPALYEKIPTADLEEDKPGLADEVALGVTYAEIDDYLEGKTISPEAQATIENWWHKGQHKRHLPITVFDDFWE</sequence>
<proteinExistence type="inferred from homology"/>
<comment type="function">
    <text evidence="1">Catalyzes the ATP-dependent amidation of deamido-NAD to form NAD. Uses ammonia as a nitrogen source.</text>
</comment>
<comment type="catalytic activity">
    <reaction evidence="1">
        <text>deamido-NAD(+) + NH4(+) + ATP = AMP + diphosphate + NAD(+) + H(+)</text>
        <dbReference type="Rhea" id="RHEA:21188"/>
        <dbReference type="ChEBI" id="CHEBI:15378"/>
        <dbReference type="ChEBI" id="CHEBI:28938"/>
        <dbReference type="ChEBI" id="CHEBI:30616"/>
        <dbReference type="ChEBI" id="CHEBI:33019"/>
        <dbReference type="ChEBI" id="CHEBI:57540"/>
        <dbReference type="ChEBI" id="CHEBI:58437"/>
        <dbReference type="ChEBI" id="CHEBI:456215"/>
        <dbReference type="EC" id="6.3.1.5"/>
    </reaction>
</comment>
<comment type="pathway">
    <text evidence="1">Cofactor biosynthesis; NAD(+) biosynthesis; NAD(+) from deamido-NAD(+) (ammonia route): step 1/1.</text>
</comment>
<comment type="subunit">
    <text evidence="1">Homodimer.</text>
</comment>
<comment type="similarity">
    <text evidence="1">Belongs to the NAD synthetase family.</text>
</comment>
<feature type="chain" id="PRO_1000191512" description="NH(3)-dependent NAD(+) synthetase">
    <location>
        <begin position="1"/>
        <end position="274"/>
    </location>
</feature>
<feature type="binding site" evidence="1">
    <location>
        <begin position="46"/>
        <end position="53"/>
    </location>
    <ligand>
        <name>ATP</name>
        <dbReference type="ChEBI" id="CHEBI:30616"/>
    </ligand>
</feature>
<feature type="binding site" evidence="1">
    <location>
        <position position="52"/>
    </location>
    <ligand>
        <name>Mg(2+)</name>
        <dbReference type="ChEBI" id="CHEBI:18420"/>
    </ligand>
</feature>
<feature type="binding site" evidence="1">
    <location>
        <position position="140"/>
    </location>
    <ligand>
        <name>deamido-NAD(+)</name>
        <dbReference type="ChEBI" id="CHEBI:58437"/>
    </ligand>
</feature>
<feature type="binding site" evidence="1">
    <location>
        <position position="160"/>
    </location>
    <ligand>
        <name>ATP</name>
        <dbReference type="ChEBI" id="CHEBI:30616"/>
    </ligand>
</feature>
<feature type="binding site" evidence="1">
    <location>
        <position position="165"/>
    </location>
    <ligand>
        <name>Mg(2+)</name>
        <dbReference type="ChEBI" id="CHEBI:18420"/>
    </ligand>
</feature>
<feature type="binding site" evidence="1">
    <location>
        <position position="173"/>
    </location>
    <ligand>
        <name>deamido-NAD(+)</name>
        <dbReference type="ChEBI" id="CHEBI:58437"/>
    </ligand>
</feature>
<feature type="binding site" evidence="1">
    <location>
        <position position="180"/>
    </location>
    <ligand>
        <name>deamido-NAD(+)</name>
        <dbReference type="ChEBI" id="CHEBI:58437"/>
    </ligand>
</feature>
<feature type="binding site" evidence="1">
    <location>
        <position position="189"/>
    </location>
    <ligand>
        <name>ATP</name>
        <dbReference type="ChEBI" id="CHEBI:30616"/>
    </ligand>
</feature>
<feature type="binding site" evidence="1">
    <location>
        <position position="211"/>
    </location>
    <ligand>
        <name>ATP</name>
        <dbReference type="ChEBI" id="CHEBI:30616"/>
    </ligand>
</feature>
<feature type="binding site" evidence="1">
    <location>
        <begin position="260"/>
        <end position="261"/>
    </location>
    <ligand>
        <name>deamido-NAD(+)</name>
        <dbReference type="ChEBI" id="CHEBI:58437"/>
    </ligand>
</feature>
<name>NADE_STRZT</name>
<organism>
    <name type="scientific">Streptococcus pneumoniae (strain Taiwan19F-14)</name>
    <dbReference type="NCBI Taxonomy" id="487213"/>
    <lineage>
        <taxon>Bacteria</taxon>
        <taxon>Bacillati</taxon>
        <taxon>Bacillota</taxon>
        <taxon>Bacilli</taxon>
        <taxon>Lactobacillales</taxon>
        <taxon>Streptococcaceae</taxon>
        <taxon>Streptococcus</taxon>
    </lineage>
</organism>
<gene>
    <name evidence="1" type="primary">nadE</name>
    <name type="ordered locus">SPT_0854</name>
</gene>